<accession>A7TTT7</accession>
<reference key="1">
    <citation type="journal article" date="2007" name="Proc. Natl. Acad. Sci. U.S.A.">
        <title>Independent sorting-out of thousands of duplicated gene pairs in two yeast species descended from a whole-genome duplication.</title>
        <authorList>
            <person name="Scannell D.R."/>
            <person name="Frank A.C."/>
            <person name="Conant G.C."/>
            <person name="Byrne K.P."/>
            <person name="Woolfit M."/>
            <person name="Wolfe K.H."/>
        </authorList>
    </citation>
    <scope>NUCLEOTIDE SEQUENCE [LARGE SCALE GENOMIC DNA]</scope>
    <source>
        <strain>ATCC 22028 / DSM 70294 / BCRC 21397 / CBS 2163 / NBRC 10782 / NRRL Y-8283 / UCD 57-17</strain>
    </source>
</reference>
<gene>
    <name type="primary">TDA2</name>
    <name type="ORF">Kpol_147p1</name>
</gene>
<proteinExistence type="inferred from homology"/>
<keyword id="KW-0966">Cell projection</keyword>
<keyword id="KW-0963">Cytoplasm</keyword>
<keyword id="KW-1185">Reference proteome</keyword>
<dbReference type="EMBL" id="DS480624">
    <property type="protein sequence ID" value="EDO14318.1"/>
    <property type="molecule type" value="Genomic_DNA"/>
</dbReference>
<dbReference type="RefSeq" id="XP_001642176.1">
    <property type="nucleotide sequence ID" value="XM_001642126.1"/>
</dbReference>
<dbReference type="SMR" id="A7TTT7"/>
<dbReference type="FunCoup" id="A7TTT7">
    <property type="interactions" value="38"/>
</dbReference>
<dbReference type="STRING" id="436907.A7TTT7"/>
<dbReference type="GeneID" id="5542289"/>
<dbReference type="KEGG" id="vpo:Kpol_147p1"/>
<dbReference type="eggNOG" id="ENOG502S7YH">
    <property type="taxonomic scope" value="Eukaryota"/>
</dbReference>
<dbReference type="HOGENOM" id="CLU_137494_1_0_1"/>
<dbReference type="InParanoid" id="A7TTT7"/>
<dbReference type="OMA" id="TIIWISK"/>
<dbReference type="OrthoDB" id="10059120at2759"/>
<dbReference type="PhylomeDB" id="A7TTT7"/>
<dbReference type="Proteomes" id="UP000000267">
    <property type="component" value="Unassembled WGS sequence"/>
</dbReference>
<dbReference type="GO" id="GO:0110131">
    <property type="term" value="C:Aim21-Tda2 complex"/>
    <property type="evidence" value="ECO:0007669"/>
    <property type="project" value="EnsemblFungi"/>
</dbReference>
<dbReference type="GO" id="GO:0042995">
    <property type="term" value="C:cell projection"/>
    <property type="evidence" value="ECO:0007669"/>
    <property type="project" value="UniProtKB-SubCell"/>
</dbReference>
<dbReference type="GO" id="GO:0051015">
    <property type="term" value="F:actin filament binding"/>
    <property type="evidence" value="ECO:0007669"/>
    <property type="project" value="EnsemblFungi"/>
</dbReference>
<dbReference type="GO" id="GO:0030837">
    <property type="term" value="P:negative regulation of actin filament polymerization"/>
    <property type="evidence" value="ECO:0007669"/>
    <property type="project" value="EnsemblFungi"/>
</dbReference>
<dbReference type="GO" id="GO:2000813">
    <property type="term" value="P:negative regulation of barbed-end actin filament capping"/>
    <property type="evidence" value="ECO:0007669"/>
    <property type="project" value="EnsemblFungi"/>
</dbReference>
<dbReference type="CDD" id="cd21457">
    <property type="entry name" value="DLC-like_TDA2"/>
    <property type="match status" value="1"/>
</dbReference>
<dbReference type="Gene3D" id="3.30.1140.40">
    <property type="entry name" value="Tctex-1"/>
    <property type="match status" value="1"/>
</dbReference>
<dbReference type="InterPro" id="IPR005334">
    <property type="entry name" value="Tctex-1-like"/>
</dbReference>
<dbReference type="InterPro" id="IPR038586">
    <property type="entry name" value="Tctex-1-like_sf"/>
</dbReference>
<dbReference type="Pfam" id="PF03645">
    <property type="entry name" value="Tctex-1"/>
    <property type="match status" value="1"/>
</dbReference>
<evidence type="ECO:0000250" key="1">
    <source>
        <dbReference type="UniProtKB" id="P40045"/>
    </source>
</evidence>
<evidence type="ECO:0000305" key="2"/>
<comment type="subcellular location">
    <subcellularLocation>
        <location evidence="1">Cytoplasm</location>
    </subcellularLocation>
    <subcellularLocation>
        <location evidence="1">Cell projection</location>
    </subcellularLocation>
    <text evidence="1">Concentrates at cytoplasmic punctate structures and localizes at the mating projection tip.</text>
</comment>
<comment type="similarity">
    <text evidence="2">Belongs to the TDA2 family.</text>
</comment>
<organism>
    <name type="scientific">Vanderwaltozyma polyspora (strain ATCC 22028 / DSM 70294 / BCRC 21397 / CBS 2163 / NBRC 10782 / NRRL Y-8283 / UCD 57-17)</name>
    <name type="common">Kluyveromyces polysporus</name>
    <dbReference type="NCBI Taxonomy" id="436907"/>
    <lineage>
        <taxon>Eukaryota</taxon>
        <taxon>Fungi</taxon>
        <taxon>Dikarya</taxon>
        <taxon>Ascomycota</taxon>
        <taxon>Saccharomycotina</taxon>
        <taxon>Saccharomycetes</taxon>
        <taxon>Saccharomycetales</taxon>
        <taxon>Saccharomycetaceae</taxon>
        <taxon>Vanderwaltozyma</taxon>
    </lineage>
</organism>
<protein>
    <recommendedName>
        <fullName>Topoisomerase I damage affected protein 2</fullName>
    </recommendedName>
</protein>
<feature type="chain" id="PRO_0000410733" description="Topoisomerase I damage affected protein 2">
    <location>
        <begin position="1"/>
        <end position="121"/>
    </location>
</feature>
<name>TDA2_VANPO</name>
<sequence>MNVEIGNRSLDNENSPIPKEKLTTLIDEVYGERKEKSDFTYNNLIQGILEGLNKHSSFYKYIVTVTDVQNKQSGSNDFELEHYFGASWSSKKDGLFQYCLPSEEDTSSQSVVTIVWISKSI</sequence>